<dbReference type="EC" id="1.17.7.3" evidence="1"/>
<dbReference type="EMBL" id="AP006627">
    <property type="protein sequence ID" value="BAD64243.1"/>
    <property type="molecule type" value="Genomic_DNA"/>
</dbReference>
<dbReference type="RefSeq" id="WP_011246552.1">
    <property type="nucleotide sequence ID" value="NC_006582.1"/>
</dbReference>
<dbReference type="SMR" id="Q5WHB2"/>
<dbReference type="STRING" id="66692.ABC1708"/>
<dbReference type="KEGG" id="bcl:ABC1708"/>
<dbReference type="eggNOG" id="COG0821">
    <property type="taxonomic scope" value="Bacteria"/>
</dbReference>
<dbReference type="HOGENOM" id="CLU_042258_0_0_9"/>
<dbReference type="OrthoDB" id="9803214at2"/>
<dbReference type="UniPathway" id="UPA00056">
    <property type="reaction ID" value="UER00096"/>
</dbReference>
<dbReference type="Proteomes" id="UP000001168">
    <property type="component" value="Chromosome"/>
</dbReference>
<dbReference type="GO" id="GO:0051539">
    <property type="term" value="F:4 iron, 4 sulfur cluster binding"/>
    <property type="evidence" value="ECO:0007669"/>
    <property type="project" value="UniProtKB-UniRule"/>
</dbReference>
<dbReference type="GO" id="GO:0046429">
    <property type="term" value="F:4-hydroxy-3-methylbut-2-en-1-yl diphosphate synthase activity (ferredoxin)"/>
    <property type="evidence" value="ECO:0007669"/>
    <property type="project" value="UniProtKB-UniRule"/>
</dbReference>
<dbReference type="GO" id="GO:0141197">
    <property type="term" value="F:4-hydroxy-3-methylbut-2-enyl-diphosphate synthase activity (flavodoxin)"/>
    <property type="evidence" value="ECO:0007669"/>
    <property type="project" value="UniProtKB-EC"/>
</dbReference>
<dbReference type="GO" id="GO:0005506">
    <property type="term" value="F:iron ion binding"/>
    <property type="evidence" value="ECO:0007669"/>
    <property type="project" value="InterPro"/>
</dbReference>
<dbReference type="GO" id="GO:0019288">
    <property type="term" value="P:isopentenyl diphosphate biosynthetic process, methylerythritol 4-phosphate pathway"/>
    <property type="evidence" value="ECO:0007669"/>
    <property type="project" value="UniProtKB-UniRule"/>
</dbReference>
<dbReference type="GO" id="GO:0016114">
    <property type="term" value="P:terpenoid biosynthetic process"/>
    <property type="evidence" value="ECO:0007669"/>
    <property type="project" value="InterPro"/>
</dbReference>
<dbReference type="FunFam" id="3.20.20.20:FF:000001">
    <property type="entry name" value="4-hydroxy-3-methylbut-2-en-1-yl diphosphate synthase (flavodoxin)"/>
    <property type="match status" value="1"/>
</dbReference>
<dbReference type="FunFam" id="3.30.413.10:FF:000005">
    <property type="entry name" value="4-hydroxy-3-methylbut-2-en-1-yl diphosphate synthase (flavodoxin)"/>
    <property type="match status" value="1"/>
</dbReference>
<dbReference type="Gene3D" id="3.20.20.20">
    <property type="entry name" value="Dihydropteroate synthase-like"/>
    <property type="match status" value="1"/>
</dbReference>
<dbReference type="Gene3D" id="3.30.413.10">
    <property type="entry name" value="Sulfite Reductase Hemoprotein, domain 1"/>
    <property type="match status" value="1"/>
</dbReference>
<dbReference type="HAMAP" id="MF_00159">
    <property type="entry name" value="IspG"/>
    <property type="match status" value="1"/>
</dbReference>
<dbReference type="InterPro" id="IPR011005">
    <property type="entry name" value="Dihydropteroate_synth-like_sf"/>
</dbReference>
<dbReference type="InterPro" id="IPR016425">
    <property type="entry name" value="IspG_bac"/>
</dbReference>
<dbReference type="InterPro" id="IPR004588">
    <property type="entry name" value="IspG_bac-typ"/>
</dbReference>
<dbReference type="InterPro" id="IPR045854">
    <property type="entry name" value="NO2/SO3_Rdtase_4Fe4S_sf"/>
</dbReference>
<dbReference type="NCBIfam" id="TIGR00612">
    <property type="entry name" value="ispG_gcpE"/>
    <property type="match status" value="1"/>
</dbReference>
<dbReference type="NCBIfam" id="NF001540">
    <property type="entry name" value="PRK00366.1"/>
    <property type="match status" value="1"/>
</dbReference>
<dbReference type="PANTHER" id="PTHR30454">
    <property type="entry name" value="4-HYDROXY-3-METHYLBUT-2-EN-1-YL DIPHOSPHATE SYNTHASE"/>
    <property type="match status" value="1"/>
</dbReference>
<dbReference type="PANTHER" id="PTHR30454:SF0">
    <property type="entry name" value="4-HYDROXY-3-METHYLBUT-2-EN-1-YL DIPHOSPHATE SYNTHASE (FERREDOXIN), CHLOROPLASTIC"/>
    <property type="match status" value="1"/>
</dbReference>
<dbReference type="Pfam" id="PF04551">
    <property type="entry name" value="GcpE"/>
    <property type="match status" value="1"/>
</dbReference>
<dbReference type="PIRSF" id="PIRSF004640">
    <property type="entry name" value="IspG"/>
    <property type="match status" value="1"/>
</dbReference>
<dbReference type="SUPFAM" id="SSF51717">
    <property type="entry name" value="Dihydropteroate synthetase-like"/>
    <property type="match status" value="1"/>
</dbReference>
<dbReference type="SUPFAM" id="SSF56014">
    <property type="entry name" value="Nitrite and sulphite reductase 4Fe-4S domain-like"/>
    <property type="match status" value="1"/>
</dbReference>
<gene>
    <name evidence="1" type="primary">ispG</name>
    <name type="ordered locus">ABC1708</name>
</gene>
<proteinExistence type="inferred from homology"/>
<evidence type="ECO:0000255" key="1">
    <source>
        <dbReference type="HAMAP-Rule" id="MF_00159"/>
    </source>
</evidence>
<organism>
    <name type="scientific">Shouchella clausii (strain KSM-K16)</name>
    <name type="common">Alkalihalobacillus clausii</name>
    <dbReference type="NCBI Taxonomy" id="66692"/>
    <lineage>
        <taxon>Bacteria</taxon>
        <taxon>Bacillati</taxon>
        <taxon>Bacillota</taxon>
        <taxon>Bacilli</taxon>
        <taxon>Bacillales</taxon>
        <taxon>Bacillaceae</taxon>
        <taxon>Shouchella</taxon>
    </lineage>
</organism>
<reference key="1">
    <citation type="submission" date="2003-10" db="EMBL/GenBank/DDBJ databases">
        <title>The complete genome sequence of the alkaliphilic Bacillus clausii KSM-K16.</title>
        <authorList>
            <person name="Takaki Y."/>
            <person name="Kageyama Y."/>
            <person name="Shimamura S."/>
            <person name="Suzuki H."/>
            <person name="Nishi S."/>
            <person name="Hatada Y."/>
            <person name="Kawai S."/>
            <person name="Ito S."/>
            <person name="Horikoshi K."/>
        </authorList>
    </citation>
    <scope>NUCLEOTIDE SEQUENCE [LARGE SCALE GENOMIC DNA]</scope>
    <source>
        <strain>KSM-K16</strain>
    </source>
</reference>
<sequence length="367" mass="39876">MAERVHRKNTRPVKVGNLTIGGNDEIIIQSMTTTKTHDVEATVAEINRLEEAGCQIVRVACPDMRAAEAISEIKKRINIPLVVDIHFNYKFALKAIEGGADKIRINPGNIGKRENVEAVVKAAKEKGIPIRIGVNAGSLERHLLEKYGYPTADAMVESALHHIRILEELDFYDIIVSMKASDVRLAIEAYDKASRAFDYPLHLGITESGTLFAGTVKSAAGIGALLHMGIGNTLRISLSADPVEEVKVARELLKSFGLAANAATLISCPTCGRIEIDLISIANEVEEYISKIKAPIKVAVLGCAVNGPGEAREADIGIAGARGEGLLFMKGEIVRKVPEETMVEELKKEIDKLAEEHYAKQREAQPN</sequence>
<name>ISPG_SHOC1</name>
<comment type="function">
    <text evidence="1">Converts 2C-methyl-D-erythritol 2,4-cyclodiphosphate (ME-2,4cPP) into 1-hydroxy-2-methyl-2-(E)-butenyl 4-diphosphate.</text>
</comment>
<comment type="catalytic activity">
    <reaction evidence="1">
        <text>(2E)-4-hydroxy-3-methylbut-2-enyl diphosphate + oxidized [flavodoxin] + H2O + 2 H(+) = 2-C-methyl-D-erythritol 2,4-cyclic diphosphate + reduced [flavodoxin]</text>
        <dbReference type="Rhea" id="RHEA:43604"/>
        <dbReference type="Rhea" id="RHEA-COMP:10622"/>
        <dbReference type="Rhea" id="RHEA-COMP:10623"/>
        <dbReference type="ChEBI" id="CHEBI:15377"/>
        <dbReference type="ChEBI" id="CHEBI:15378"/>
        <dbReference type="ChEBI" id="CHEBI:57618"/>
        <dbReference type="ChEBI" id="CHEBI:58210"/>
        <dbReference type="ChEBI" id="CHEBI:58483"/>
        <dbReference type="ChEBI" id="CHEBI:128753"/>
        <dbReference type="EC" id="1.17.7.3"/>
    </reaction>
</comment>
<comment type="cofactor">
    <cofactor evidence="1">
        <name>[4Fe-4S] cluster</name>
        <dbReference type="ChEBI" id="CHEBI:49883"/>
    </cofactor>
    <text evidence="1">Binds 1 [4Fe-4S] cluster.</text>
</comment>
<comment type="pathway">
    <text evidence="1">Isoprenoid biosynthesis; isopentenyl diphosphate biosynthesis via DXP pathway; isopentenyl diphosphate from 1-deoxy-D-xylulose 5-phosphate: step 5/6.</text>
</comment>
<comment type="similarity">
    <text evidence="1">Belongs to the IspG family.</text>
</comment>
<accession>Q5WHB2</accession>
<keyword id="KW-0004">4Fe-4S</keyword>
<keyword id="KW-0408">Iron</keyword>
<keyword id="KW-0411">Iron-sulfur</keyword>
<keyword id="KW-0414">Isoprene biosynthesis</keyword>
<keyword id="KW-0479">Metal-binding</keyword>
<keyword id="KW-0560">Oxidoreductase</keyword>
<keyword id="KW-1185">Reference proteome</keyword>
<feature type="chain" id="PRO_0000190536" description="4-hydroxy-3-methylbut-2-en-1-yl diphosphate synthase (flavodoxin)">
    <location>
        <begin position="1"/>
        <end position="367"/>
    </location>
</feature>
<feature type="binding site" evidence="1">
    <location>
        <position position="268"/>
    </location>
    <ligand>
        <name>[4Fe-4S] cluster</name>
        <dbReference type="ChEBI" id="CHEBI:49883"/>
    </ligand>
</feature>
<feature type="binding site" evidence="1">
    <location>
        <position position="271"/>
    </location>
    <ligand>
        <name>[4Fe-4S] cluster</name>
        <dbReference type="ChEBI" id="CHEBI:49883"/>
    </ligand>
</feature>
<feature type="binding site" evidence="1">
    <location>
        <position position="303"/>
    </location>
    <ligand>
        <name>[4Fe-4S] cluster</name>
        <dbReference type="ChEBI" id="CHEBI:49883"/>
    </ligand>
</feature>
<feature type="binding site" evidence="1">
    <location>
        <position position="310"/>
    </location>
    <ligand>
        <name>[4Fe-4S] cluster</name>
        <dbReference type="ChEBI" id="CHEBI:49883"/>
    </ligand>
</feature>
<protein>
    <recommendedName>
        <fullName evidence="1">4-hydroxy-3-methylbut-2-en-1-yl diphosphate synthase (flavodoxin)</fullName>
        <ecNumber evidence="1">1.17.7.3</ecNumber>
    </recommendedName>
    <alternativeName>
        <fullName evidence="1">1-hydroxy-2-methyl-2-(E)-butenyl 4-diphosphate synthase</fullName>
    </alternativeName>
</protein>